<keyword id="KW-0967">Endosome</keyword>
<keyword id="KW-0472">Membrane</keyword>
<keyword id="KW-0653">Protein transport</keyword>
<keyword id="KW-0728">SH3 domain</keyword>
<keyword id="KW-0813">Transport</keyword>
<dbReference type="EMBL" id="CH445346">
    <property type="protein sequence ID" value="EAT80300.2"/>
    <property type="status" value="ALT_SEQ"/>
    <property type="molecule type" value="Genomic_DNA"/>
</dbReference>
<dbReference type="RefSeq" id="XP_001802709.1">
    <property type="nucleotide sequence ID" value="XM_001802657.1"/>
</dbReference>
<dbReference type="SMR" id="Q0U6X7"/>
<dbReference type="FunCoup" id="Q0U6X7">
    <property type="interactions" value="305"/>
</dbReference>
<dbReference type="STRING" id="321614.Q0U6X7"/>
<dbReference type="GeneID" id="5979618"/>
<dbReference type="KEGG" id="pno:SNOG_12487"/>
<dbReference type="VEuPathDB" id="FungiDB:JI435_124870"/>
<dbReference type="eggNOG" id="KOG2199">
    <property type="taxonomic scope" value="Eukaryota"/>
</dbReference>
<dbReference type="InParanoid" id="Q0U6X7"/>
<dbReference type="OMA" id="QVYRDWW"/>
<dbReference type="OrthoDB" id="10255964at2759"/>
<dbReference type="Proteomes" id="UP000001055">
    <property type="component" value="Unassembled WGS sequence"/>
</dbReference>
<dbReference type="GO" id="GO:0010008">
    <property type="term" value="C:endosome membrane"/>
    <property type="evidence" value="ECO:0007669"/>
    <property type="project" value="UniProtKB-SubCell"/>
</dbReference>
<dbReference type="GO" id="GO:0033565">
    <property type="term" value="C:ESCRT-0 complex"/>
    <property type="evidence" value="ECO:0000318"/>
    <property type="project" value="GO_Central"/>
</dbReference>
<dbReference type="GO" id="GO:0035091">
    <property type="term" value="F:phosphatidylinositol binding"/>
    <property type="evidence" value="ECO:0007669"/>
    <property type="project" value="InterPro"/>
</dbReference>
<dbReference type="GO" id="GO:0043130">
    <property type="term" value="F:ubiquitin binding"/>
    <property type="evidence" value="ECO:0007669"/>
    <property type="project" value="InterPro"/>
</dbReference>
<dbReference type="GO" id="GO:0043328">
    <property type="term" value="P:protein transport to vacuole involved in ubiquitin-dependent protein catabolic process via the multivesicular body sorting pathway"/>
    <property type="evidence" value="ECO:0000318"/>
    <property type="project" value="GO_Central"/>
</dbReference>
<dbReference type="CDD" id="cd21386">
    <property type="entry name" value="GAT_Hse1"/>
    <property type="match status" value="1"/>
</dbReference>
<dbReference type="CDD" id="cd11805">
    <property type="entry name" value="SH3_GRB2_like_C"/>
    <property type="match status" value="1"/>
</dbReference>
<dbReference type="CDD" id="cd16978">
    <property type="entry name" value="VHS_HSE1"/>
    <property type="match status" value="1"/>
</dbReference>
<dbReference type="FunFam" id="2.30.30.40:FF:000072">
    <property type="entry name" value="Unconventional Myosin IB"/>
    <property type="match status" value="1"/>
</dbReference>
<dbReference type="Gene3D" id="1.20.5.1940">
    <property type="match status" value="1"/>
</dbReference>
<dbReference type="Gene3D" id="1.25.40.90">
    <property type="match status" value="1"/>
</dbReference>
<dbReference type="Gene3D" id="2.30.30.40">
    <property type="entry name" value="SH3 Domains"/>
    <property type="match status" value="1"/>
</dbReference>
<dbReference type="InterPro" id="IPR008942">
    <property type="entry name" value="ENTH_VHS"/>
</dbReference>
<dbReference type="InterPro" id="IPR004152">
    <property type="entry name" value="GAT_dom"/>
</dbReference>
<dbReference type="InterPro" id="IPR036028">
    <property type="entry name" value="SH3-like_dom_sf"/>
</dbReference>
<dbReference type="InterPro" id="IPR001452">
    <property type="entry name" value="SH3_domain"/>
</dbReference>
<dbReference type="InterPro" id="IPR050670">
    <property type="entry name" value="STAM"/>
</dbReference>
<dbReference type="InterPro" id="IPR002014">
    <property type="entry name" value="VHS_dom"/>
</dbReference>
<dbReference type="PANTHER" id="PTHR45929">
    <property type="entry name" value="JAK PATHWAY SIGNAL TRANSDUCTION ADAPTOR MOLECULE"/>
    <property type="match status" value="1"/>
</dbReference>
<dbReference type="PANTHER" id="PTHR45929:SF3">
    <property type="entry name" value="JAK PATHWAY SIGNAL TRANSDUCTION ADAPTOR MOLECULE"/>
    <property type="match status" value="1"/>
</dbReference>
<dbReference type="Pfam" id="PF03127">
    <property type="entry name" value="GAT"/>
    <property type="match status" value="1"/>
</dbReference>
<dbReference type="Pfam" id="PF00018">
    <property type="entry name" value="SH3_1"/>
    <property type="match status" value="1"/>
</dbReference>
<dbReference type="Pfam" id="PF00790">
    <property type="entry name" value="VHS"/>
    <property type="match status" value="1"/>
</dbReference>
<dbReference type="PRINTS" id="PR00452">
    <property type="entry name" value="SH3DOMAIN"/>
</dbReference>
<dbReference type="PRINTS" id="PR01887">
    <property type="entry name" value="SPECTRNALPHA"/>
</dbReference>
<dbReference type="SMART" id="SM00326">
    <property type="entry name" value="SH3"/>
    <property type="match status" value="1"/>
</dbReference>
<dbReference type="SMART" id="SM00288">
    <property type="entry name" value="VHS"/>
    <property type="match status" value="1"/>
</dbReference>
<dbReference type="SUPFAM" id="SSF48464">
    <property type="entry name" value="ENTH/VHS domain"/>
    <property type="match status" value="1"/>
</dbReference>
<dbReference type="SUPFAM" id="SSF50044">
    <property type="entry name" value="SH3-domain"/>
    <property type="match status" value="1"/>
</dbReference>
<dbReference type="PROSITE" id="PS50002">
    <property type="entry name" value="SH3"/>
    <property type="match status" value="1"/>
</dbReference>
<dbReference type="PROSITE" id="PS50179">
    <property type="entry name" value="VHS"/>
    <property type="match status" value="1"/>
</dbReference>
<reference key="1">
    <citation type="journal article" date="2007" name="Plant Cell">
        <title>Dothideomycete-plant interactions illuminated by genome sequencing and EST analysis of the wheat pathogen Stagonospora nodorum.</title>
        <authorList>
            <person name="Hane J.K."/>
            <person name="Lowe R.G.T."/>
            <person name="Solomon P.S."/>
            <person name="Tan K.-C."/>
            <person name="Schoch C.L."/>
            <person name="Spatafora J.W."/>
            <person name="Crous P.W."/>
            <person name="Kodira C.D."/>
            <person name="Birren B.W."/>
            <person name="Galagan J.E."/>
            <person name="Torriani S.F.F."/>
            <person name="McDonald B.A."/>
            <person name="Oliver R.P."/>
        </authorList>
    </citation>
    <scope>NUCLEOTIDE SEQUENCE [LARGE SCALE GENOMIC DNA]</scope>
    <source>
        <strain>SN15 / ATCC MYA-4574 / FGSC 10173</strain>
    </source>
</reference>
<comment type="function">
    <text evidence="1">Component of the ESCRT-0 complex which is the sorting receptor for ubiquitinated cargo proteins at the multivesicular body (MVB).</text>
</comment>
<comment type="subunit">
    <text evidence="1">Component of the ESCRT-0 complex composed of HSE1 and VPS27.</text>
</comment>
<comment type="subcellular location">
    <subcellularLocation>
        <location evidence="1">Endosome membrane</location>
        <topology evidence="1">Peripheral membrane protein</topology>
        <orientation evidence="1">Cytoplasmic side</orientation>
    </subcellularLocation>
</comment>
<comment type="similarity">
    <text evidence="5">Belongs to the STAM family.</text>
</comment>
<comment type="sequence caution" evidence="5">
    <conflict type="erroneous gene model prediction">
        <sequence resource="EMBL-CDS" id="EAT80300"/>
    </conflict>
</comment>
<sequence>MFRAQSNIFDDVVVKATDENLTSENWEYILDVCDKVGSSDTGAKDAVAAMIKRLAHRNANVQLYTLELANALSQNCGIQMHKELASRSFTDAMLRLANDRNTHQAVKAKILERMGEWSEMFSRDPDLGIMEGAYMKLKTQNPNLRAPSKPQKTQISDSDRQKEEEELQMALAMSIKESKGATPSAAKANAPQESNAGSSSQAAPAPQPVQPGTTAATVSRVRALFDFQPSEPGELQFKKGDIIAVLESVYKDWWKGSLRGNTGIFPLNYVEKLQDPTREELEKEAQTEAEVFAQIRNVEKLLALLSTNTQAGGGDGRDNEEITELYHSTLAIRPKLIELIGKYSQKKDDFTQLNEKFIKARRDYESLLEASMSQPPQPSYGSRPPYGYNAPPPSNYTGYPPSSPPPQQYGYGAGAPPQGSAPQYPPVGANPAFFMVPPAGEQRPQQQTPQPGPPSDPYSLPQGRVPIGGRPQSYAPQELATAHYDSPVDNRHSFAGPSQPQGAPSAPQGYEYPPSQAPPGYPPQQGAPLQGPPPGQQNPYEQISSPPTHQQPPSDPYSQPPPQVGHGYPPQQPAHAPPAPPGASSSPAPAQGYLPYRPPGQAPSAPPVGGGGDEGFYR</sequence>
<evidence type="ECO:0000250" key="1"/>
<evidence type="ECO:0000255" key="2">
    <source>
        <dbReference type="PROSITE-ProRule" id="PRU00192"/>
    </source>
</evidence>
<evidence type="ECO:0000255" key="3">
    <source>
        <dbReference type="PROSITE-ProRule" id="PRU00218"/>
    </source>
</evidence>
<evidence type="ECO:0000256" key="4">
    <source>
        <dbReference type="SAM" id="MobiDB-lite"/>
    </source>
</evidence>
<evidence type="ECO:0000305" key="5"/>
<protein>
    <recommendedName>
        <fullName>Class E vacuolar protein-sorting machinery protein HSE1</fullName>
    </recommendedName>
</protein>
<accession>Q0U6X7</accession>
<feature type="chain" id="PRO_0000292501" description="Class E vacuolar protein-sorting machinery protein HSE1">
    <location>
        <begin position="1"/>
        <end position="618"/>
    </location>
</feature>
<feature type="domain" description="VHS" evidence="3">
    <location>
        <begin position="16"/>
        <end position="145"/>
    </location>
</feature>
<feature type="domain" description="UIM" evidence="5">
    <location>
        <begin position="162"/>
        <end position="181"/>
    </location>
</feature>
<feature type="domain" description="SH3" evidence="2">
    <location>
        <begin position="216"/>
        <end position="275"/>
    </location>
</feature>
<feature type="region of interest" description="Disordered" evidence="4">
    <location>
        <begin position="139"/>
        <end position="165"/>
    </location>
</feature>
<feature type="region of interest" description="Disordered" evidence="4">
    <location>
        <begin position="177"/>
        <end position="214"/>
    </location>
</feature>
<feature type="region of interest" description="Disordered" evidence="4">
    <location>
        <begin position="369"/>
        <end position="618"/>
    </location>
</feature>
<feature type="compositionally biased region" description="Low complexity" evidence="4">
    <location>
        <begin position="196"/>
        <end position="214"/>
    </location>
</feature>
<feature type="compositionally biased region" description="Low complexity" evidence="4">
    <location>
        <begin position="495"/>
        <end position="509"/>
    </location>
</feature>
<feature type="compositionally biased region" description="Pro residues" evidence="4">
    <location>
        <begin position="549"/>
        <end position="563"/>
    </location>
</feature>
<feature type="compositionally biased region" description="Pro residues" evidence="4">
    <location>
        <begin position="570"/>
        <end position="581"/>
    </location>
</feature>
<feature type="compositionally biased region" description="Low complexity" evidence="4">
    <location>
        <begin position="582"/>
        <end position="593"/>
    </location>
</feature>
<feature type="compositionally biased region" description="Pro residues" evidence="4">
    <location>
        <begin position="596"/>
        <end position="606"/>
    </location>
</feature>
<feature type="compositionally biased region" description="Gly residues" evidence="4">
    <location>
        <begin position="608"/>
        <end position="618"/>
    </location>
</feature>
<proteinExistence type="inferred from homology"/>
<name>HSE1_PHANO</name>
<gene>
    <name type="primary">HSE1</name>
    <name type="ORF">SNOG_12487</name>
</gene>
<organism>
    <name type="scientific">Phaeosphaeria nodorum (strain SN15 / ATCC MYA-4574 / FGSC 10173)</name>
    <name type="common">Glume blotch fungus</name>
    <name type="synonym">Parastagonospora nodorum</name>
    <dbReference type="NCBI Taxonomy" id="321614"/>
    <lineage>
        <taxon>Eukaryota</taxon>
        <taxon>Fungi</taxon>
        <taxon>Dikarya</taxon>
        <taxon>Ascomycota</taxon>
        <taxon>Pezizomycotina</taxon>
        <taxon>Dothideomycetes</taxon>
        <taxon>Pleosporomycetidae</taxon>
        <taxon>Pleosporales</taxon>
        <taxon>Pleosporineae</taxon>
        <taxon>Phaeosphaeriaceae</taxon>
        <taxon>Parastagonospora</taxon>
    </lineage>
</organism>